<protein>
    <recommendedName>
        <fullName evidence="1">NAD(P)H dehydrogenase (quinone)</fullName>
        <ecNumber evidence="1">1.6.5.2</ecNumber>
    </recommendedName>
    <alternativeName>
        <fullName>Flavoprotein WrbA</fullName>
    </alternativeName>
    <alternativeName>
        <fullName evidence="1">NAD(P)H:quinone oxidoreductase</fullName>
        <shortName evidence="1">NQO</shortName>
    </alternativeName>
</protein>
<gene>
    <name type="ordered locus">MM_2224</name>
</gene>
<comment type="catalytic activity">
    <reaction evidence="1">
        <text>a quinone + NADH + H(+) = a quinol + NAD(+)</text>
        <dbReference type="Rhea" id="RHEA:46160"/>
        <dbReference type="ChEBI" id="CHEBI:15378"/>
        <dbReference type="ChEBI" id="CHEBI:24646"/>
        <dbReference type="ChEBI" id="CHEBI:57540"/>
        <dbReference type="ChEBI" id="CHEBI:57945"/>
        <dbReference type="ChEBI" id="CHEBI:132124"/>
        <dbReference type="EC" id="1.6.5.2"/>
    </reaction>
</comment>
<comment type="catalytic activity">
    <reaction evidence="1">
        <text>a quinone + NADPH + H(+) = a quinol + NADP(+)</text>
        <dbReference type="Rhea" id="RHEA:46164"/>
        <dbReference type="ChEBI" id="CHEBI:15378"/>
        <dbReference type="ChEBI" id="CHEBI:24646"/>
        <dbReference type="ChEBI" id="CHEBI:57783"/>
        <dbReference type="ChEBI" id="CHEBI:58349"/>
        <dbReference type="ChEBI" id="CHEBI:132124"/>
        <dbReference type="EC" id="1.6.5.2"/>
    </reaction>
</comment>
<comment type="cofactor">
    <cofactor evidence="1">
        <name>FMN</name>
        <dbReference type="ChEBI" id="CHEBI:58210"/>
    </cofactor>
    <text evidence="1">Binds 1 FMN per monomer.</text>
</comment>
<comment type="similarity">
    <text evidence="1">Belongs to the WrbA family.</text>
</comment>
<name>NQOR_METMA</name>
<feature type="chain" id="PRO_0000200763" description="NAD(P)H dehydrogenase (quinone)">
    <location>
        <begin position="1"/>
        <end position="209"/>
    </location>
</feature>
<feature type="domain" description="Flavodoxin-like" evidence="1">
    <location>
        <begin position="4"/>
        <end position="199"/>
    </location>
</feature>
<feature type="binding site" evidence="1">
    <location>
        <begin position="10"/>
        <end position="15"/>
    </location>
    <ligand>
        <name>FMN</name>
        <dbReference type="ChEBI" id="CHEBI:58210"/>
    </ligand>
</feature>
<feature type="binding site" evidence="1">
    <location>
        <begin position="87"/>
        <end position="89"/>
    </location>
    <ligand>
        <name>FMN</name>
        <dbReference type="ChEBI" id="CHEBI:58210"/>
    </ligand>
</feature>
<feature type="binding site" evidence="1">
    <location>
        <position position="107"/>
    </location>
    <ligand>
        <name>substrate</name>
    </ligand>
</feature>
<feature type="binding site" evidence="1">
    <location>
        <begin position="122"/>
        <end position="128"/>
    </location>
    <ligand>
        <name>FMN</name>
        <dbReference type="ChEBI" id="CHEBI:58210"/>
    </ligand>
</feature>
<feature type="binding site" evidence="1">
    <location>
        <position position="143"/>
    </location>
    <ligand>
        <name>FMN</name>
        <dbReference type="ChEBI" id="CHEBI:58210"/>
    </ligand>
</feature>
<reference key="1">
    <citation type="journal article" date="2002" name="J. Mol. Microbiol. Biotechnol.">
        <title>The genome of Methanosarcina mazei: evidence for lateral gene transfer between Bacteria and Archaea.</title>
        <authorList>
            <person name="Deppenmeier U."/>
            <person name="Johann A."/>
            <person name="Hartsch T."/>
            <person name="Merkl R."/>
            <person name="Schmitz R.A."/>
            <person name="Martinez-Arias R."/>
            <person name="Henne A."/>
            <person name="Wiezer A."/>
            <person name="Baeumer S."/>
            <person name="Jacobi C."/>
            <person name="Brueggemann H."/>
            <person name="Lienard T."/>
            <person name="Christmann A."/>
            <person name="Boemecke M."/>
            <person name="Steckel S."/>
            <person name="Bhattacharyya A."/>
            <person name="Lykidis A."/>
            <person name="Overbeek R."/>
            <person name="Klenk H.-P."/>
            <person name="Gunsalus R.P."/>
            <person name="Fritz H.-J."/>
            <person name="Gottschalk G."/>
        </authorList>
    </citation>
    <scope>NUCLEOTIDE SEQUENCE [LARGE SCALE GENOMIC DNA]</scope>
    <source>
        <strain>ATCC BAA-159 / DSM 3647 / Goe1 / Go1 / JCM 11833 / OCM 88</strain>
    </source>
</reference>
<proteinExistence type="inferred from homology"/>
<accession>Q8PUV4</accession>
<keyword id="KW-0285">Flavoprotein</keyword>
<keyword id="KW-0288">FMN</keyword>
<keyword id="KW-0520">NAD</keyword>
<keyword id="KW-0521">NADP</keyword>
<keyword id="KW-0547">Nucleotide-binding</keyword>
<keyword id="KW-0560">Oxidoreductase</keyword>
<organism>
    <name type="scientific">Methanosarcina mazei (strain ATCC BAA-159 / DSM 3647 / Goe1 / Go1 / JCM 11833 / OCM 88)</name>
    <name type="common">Methanosarcina frisia</name>
    <dbReference type="NCBI Taxonomy" id="192952"/>
    <lineage>
        <taxon>Archaea</taxon>
        <taxon>Methanobacteriati</taxon>
        <taxon>Methanobacteriota</taxon>
        <taxon>Stenosarchaea group</taxon>
        <taxon>Methanomicrobia</taxon>
        <taxon>Methanosarcinales</taxon>
        <taxon>Methanosarcinaceae</taxon>
        <taxon>Methanosarcina</taxon>
    </lineage>
</organism>
<evidence type="ECO:0000255" key="1">
    <source>
        <dbReference type="HAMAP-Rule" id="MF_01017"/>
    </source>
</evidence>
<sequence>MVKVNIIFHSVHAHIYRMAEAVAAGAREVEGAEVGIYQVPETLPEDVLEKMGAIETKKLFAHIPVVTRDMYEDVLAGADALIFGTPTRYGMMTAQMRAVLDGLGKLWSEDAFVGKVGSVFTSSGTQHGGQESTILSFHVTLLHLGMVIVGLPYAEKRQTIMNEITGGSPYGASTIAGGDGSRQPSENELEMARYQGRHVTQIAKKIAGK</sequence>
<dbReference type="EC" id="1.6.5.2" evidence="1"/>
<dbReference type="EMBL" id="AE008384">
    <property type="protein sequence ID" value="AAM31920.1"/>
    <property type="molecule type" value="Genomic_DNA"/>
</dbReference>
<dbReference type="RefSeq" id="WP_011034155.1">
    <property type="nucleotide sequence ID" value="NC_003901.1"/>
</dbReference>
<dbReference type="SMR" id="Q8PUV4"/>
<dbReference type="GeneID" id="1480566"/>
<dbReference type="KEGG" id="mma:MM_2224"/>
<dbReference type="PATRIC" id="fig|192952.21.peg.2549"/>
<dbReference type="eggNOG" id="arCOG00510">
    <property type="taxonomic scope" value="Archaea"/>
</dbReference>
<dbReference type="HOGENOM" id="CLU_051402_0_2_2"/>
<dbReference type="Proteomes" id="UP000000595">
    <property type="component" value="Chromosome"/>
</dbReference>
<dbReference type="GO" id="GO:0016020">
    <property type="term" value="C:membrane"/>
    <property type="evidence" value="ECO:0007669"/>
    <property type="project" value="TreeGrafter"/>
</dbReference>
<dbReference type="GO" id="GO:0050660">
    <property type="term" value="F:flavin adenine dinucleotide binding"/>
    <property type="evidence" value="ECO:0007669"/>
    <property type="project" value="UniProtKB-UniRule"/>
</dbReference>
<dbReference type="GO" id="GO:0010181">
    <property type="term" value="F:FMN binding"/>
    <property type="evidence" value="ECO:0007669"/>
    <property type="project" value="InterPro"/>
</dbReference>
<dbReference type="GO" id="GO:0051287">
    <property type="term" value="F:NAD binding"/>
    <property type="evidence" value="ECO:0007669"/>
    <property type="project" value="UniProtKB-UniRule"/>
</dbReference>
<dbReference type="GO" id="GO:0050136">
    <property type="term" value="F:NADH:ubiquinone reductase (non-electrogenic) activity"/>
    <property type="evidence" value="ECO:0007669"/>
    <property type="project" value="RHEA"/>
</dbReference>
<dbReference type="GO" id="GO:0050661">
    <property type="term" value="F:NADP binding"/>
    <property type="evidence" value="ECO:0007669"/>
    <property type="project" value="UniProtKB-UniRule"/>
</dbReference>
<dbReference type="GO" id="GO:0008753">
    <property type="term" value="F:NADPH dehydrogenase (quinone) activity"/>
    <property type="evidence" value="ECO:0007669"/>
    <property type="project" value="RHEA"/>
</dbReference>
<dbReference type="FunFam" id="3.40.50.360:FF:000001">
    <property type="entry name" value="NAD(P)H dehydrogenase (Quinone) FQR1-like"/>
    <property type="match status" value="1"/>
</dbReference>
<dbReference type="Gene3D" id="3.40.50.360">
    <property type="match status" value="1"/>
</dbReference>
<dbReference type="HAMAP" id="MF_01017">
    <property type="entry name" value="NQOR"/>
    <property type="match status" value="1"/>
</dbReference>
<dbReference type="InterPro" id="IPR008254">
    <property type="entry name" value="Flavodoxin/NO_synth"/>
</dbReference>
<dbReference type="InterPro" id="IPR029039">
    <property type="entry name" value="Flavoprotein-like_sf"/>
</dbReference>
<dbReference type="InterPro" id="IPR010089">
    <property type="entry name" value="Flavoprotein_WrbA-like"/>
</dbReference>
<dbReference type="InterPro" id="IPR005025">
    <property type="entry name" value="FMN_Rdtase-like_dom"/>
</dbReference>
<dbReference type="InterPro" id="IPR037513">
    <property type="entry name" value="NQO"/>
</dbReference>
<dbReference type="NCBIfam" id="TIGR01755">
    <property type="entry name" value="flav_wrbA"/>
    <property type="match status" value="1"/>
</dbReference>
<dbReference type="NCBIfam" id="NF002999">
    <property type="entry name" value="PRK03767.1"/>
    <property type="match status" value="1"/>
</dbReference>
<dbReference type="PANTHER" id="PTHR30546">
    <property type="entry name" value="FLAVODOXIN-RELATED PROTEIN WRBA-RELATED"/>
    <property type="match status" value="1"/>
</dbReference>
<dbReference type="PANTHER" id="PTHR30546:SF23">
    <property type="entry name" value="FLAVOPROTEIN-LIKE PROTEIN YCP4-RELATED"/>
    <property type="match status" value="1"/>
</dbReference>
<dbReference type="Pfam" id="PF03358">
    <property type="entry name" value="FMN_red"/>
    <property type="match status" value="1"/>
</dbReference>
<dbReference type="SUPFAM" id="SSF52218">
    <property type="entry name" value="Flavoproteins"/>
    <property type="match status" value="1"/>
</dbReference>
<dbReference type="PROSITE" id="PS50902">
    <property type="entry name" value="FLAVODOXIN_LIKE"/>
    <property type="match status" value="1"/>
</dbReference>